<organism>
    <name type="scientific">Xylella fastidiosa (strain M12)</name>
    <dbReference type="NCBI Taxonomy" id="405440"/>
    <lineage>
        <taxon>Bacteria</taxon>
        <taxon>Pseudomonadati</taxon>
        <taxon>Pseudomonadota</taxon>
        <taxon>Gammaproteobacteria</taxon>
        <taxon>Lysobacterales</taxon>
        <taxon>Lysobacteraceae</taxon>
        <taxon>Xylella</taxon>
    </lineage>
</organism>
<keyword id="KW-0227">DNA damage</keyword>
<keyword id="KW-0234">DNA repair</keyword>
<name>MUTL_XYLFM</name>
<feature type="chain" id="PRO_1000096703" description="DNA mismatch repair protein MutL">
    <location>
        <begin position="1"/>
        <end position="621"/>
    </location>
</feature>
<comment type="function">
    <text evidence="1">This protein is involved in the repair of mismatches in DNA. It is required for dam-dependent methyl-directed DNA mismatch repair. May act as a 'molecular matchmaker', a protein that promotes the formation of a stable complex between two or more DNA-binding proteins in an ATP-dependent manner without itself being part of a final effector complex.</text>
</comment>
<comment type="similarity">
    <text evidence="1">Belongs to the DNA mismatch repair MutL/HexB family.</text>
</comment>
<dbReference type="EMBL" id="CP000941">
    <property type="protein sequence ID" value="ACA12944.1"/>
    <property type="molecule type" value="Genomic_DNA"/>
</dbReference>
<dbReference type="RefSeq" id="WP_004084548.1">
    <property type="nucleotide sequence ID" value="NC_010513.1"/>
</dbReference>
<dbReference type="SMR" id="B0U5C6"/>
<dbReference type="KEGG" id="xfm:Xfasm12_2081"/>
<dbReference type="HOGENOM" id="CLU_004131_4_2_6"/>
<dbReference type="GO" id="GO:0032300">
    <property type="term" value="C:mismatch repair complex"/>
    <property type="evidence" value="ECO:0007669"/>
    <property type="project" value="InterPro"/>
</dbReference>
<dbReference type="GO" id="GO:0005524">
    <property type="term" value="F:ATP binding"/>
    <property type="evidence" value="ECO:0007669"/>
    <property type="project" value="InterPro"/>
</dbReference>
<dbReference type="GO" id="GO:0016887">
    <property type="term" value="F:ATP hydrolysis activity"/>
    <property type="evidence" value="ECO:0007669"/>
    <property type="project" value="InterPro"/>
</dbReference>
<dbReference type="GO" id="GO:0140664">
    <property type="term" value="F:ATP-dependent DNA damage sensor activity"/>
    <property type="evidence" value="ECO:0007669"/>
    <property type="project" value="InterPro"/>
</dbReference>
<dbReference type="GO" id="GO:0030983">
    <property type="term" value="F:mismatched DNA binding"/>
    <property type="evidence" value="ECO:0007669"/>
    <property type="project" value="InterPro"/>
</dbReference>
<dbReference type="GO" id="GO:0006298">
    <property type="term" value="P:mismatch repair"/>
    <property type="evidence" value="ECO:0007669"/>
    <property type="project" value="UniProtKB-UniRule"/>
</dbReference>
<dbReference type="CDD" id="cd16926">
    <property type="entry name" value="HATPase_MutL-MLH-PMS-like"/>
    <property type="match status" value="1"/>
</dbReference>
<dbReference type="CDD" id="cd03482">
    <property type="entry name" value="MutL_Trans_MutL"/>
    <property type="match status" value="1"/>
</dbReference>
<dbReference type="FunFam" id="3.30.230.10:FF:000013">
    <property type="entry name" value="DNA mismatch repair endonuclease MutL"/>
    <property type="match status" value="1"/>
</dbReference>
<dbReference type="FunFam" id="3.30.565.10:FF:000003">
    <property type="entry name" value="DNA mismatch repair endonuclease MutL"/>
    <property type="match status" value="1"/>
</dbReference>
<dbReference type="Gene3D" id="3.30.230.10">
    <property type="match status" value="1"/>
</dbReference>
<dbReference type="Gene3D" id="3.30.565.10">
    <property type="entry name" value="Histidine kinase-like ATPase, C-terminal domain"/>
    <property type="match status" value="1"/>
</dbReference>
<dbReference type="Gene3D" id="3.30.1540.20">
    <property type="entry name" value="MutL, C-terminal domain, dimerisation subdomain"/>
    <property type="match status" value="1"/>
</dbReference>
<dbReference type="Gene3D" id="3.30.1370.100">
    <property type="entry name" value="MutL, C-terminal domain, regulatory subdomain"/>
    <property type="match status" value="1"/>
</dbReference>
<dbReference type="HAMAP" id="MF_00149">
    <property type="entry name" value="DNA_mis_repair"/>
    <property type="match status" value="1"/>
</dbReference>
<dbReference type="InterPro" id="IPR014762">
    <property type="entry name" value="DNA_mismatch_repair_CS"/>
</dbReference>
<dbReference type="InterPro" id="IPR020667">
    <property type="entry name" value="DNA_mismatch_repair_MutL"/>
</dbReference>
<dbReference type="InterPro" id="IPR013507">
    <property type="entry name" value="DNA_mismatch_S5_2-like"/>
</dbReference>
<dbReference type="InterPro" id="IPR036890">
    <property type="entry name" value="HATPase_C_sf"/>
</dbReference>
<dbReference type="InterPro" id="IPR002099">
    <property type="entry name" value="MutL/Mlh/PMS"/>
</dbReference>
<dbReference type="InterPro" id="IPR038973">
    <property type="entry name" value="MutL/Mlh/Pms-like"/>
</dbReference>
<dbReference type="InterPro" id="IPR014790">
    <property type="entry name" value="MutL_C"/>
</dbReference>
<dbReference type="InterPro" id="IPR042120">
    <property type="entry name" value="MutL_C_dimsub"/>
</dbReference>
<dbReference type="InterPro" id="IPR042121">
    <property type="entry name" value="MutL_C_regsub"/>
</dbReference>
<dbReference type="InterPro" id="IPR037198">
    <property type="entry name" value="MutL_C_sf"/>
</dbReference>
<dbReference type="InterPro" id="IPR020568">
    <property type="entry name" value="Ribosomal_Su5_D2-typ_SF"/>
</dbReference>
<dbReference type="InterPro" id="IPR014721">
    <property type="entry name" value="Ribsml_uS5_D2-typ_fold_subgr"/>
</dbReference>
<dbReference type="NCBIfam" id="TIGR00585">
    <property type="entry name" value="mutl"/>
    <property type="match status" value="1"/>
</dbReference>
<dbReference type="NCBIfam" id="NF000949">
    <property type="entry name" value="PRK00095.1-2"/>
    <property type="match status" value="1"/>
</dbReference>
<dbReference type="PANTHER" id="PTHR10073">
    <property type="entry name" value="DNA MISMATCH REPAIR PROTEIN MLH, PMS, MUTL"/>
    <property type="match status" value="1"/>
</dbReference>
<dbReference type="PANTHER" id="PTHR10073:SF12">
    <property type="entry name" value="DNA MISMATCH REPAIR PROTEIN MLH1"/>
    <property type="match status" value="1"/>
</dbReference>
<dbReference type="Pfam" id="PF01119">
    <property type="entry name" value="DNA_mis_repair"/>
    <property type="match status" value="1"/>
</dbReference>
<dbReference type="Pfam" id="PF13589">
    <property type="entry name" value="HATPase_c_3"/>
    <property type="match status" value="1"/>
</dbReference>
<dbReference type="Pfam" id="PF08676">
    <property type="entry name" value="MutL_C"/>
    <property type="match status" value="1"/>
</dbReference>
<dbReference type="SMART" id="SM01340">
    <property type="entry name" value="DNA_mis_repair"/>
    <property type="match status" value="1"/>
</dbReference>
<dbReference type="SMART" id="SM00853">
    <property type="entry name" value="MutL_C"/>
    <property type="match status" value="1"/>
</dbReference>
<dbReference type="SUPFAM" id="SSF55874">
    <property type="entry name" value="ATPase domain of HSP90 chaperone/DNA topoisomerase II/histidine kinase"/>
    <property type="match status" value="1"/>
</dbReference>
<dbReference type="SUPFAM" id="SSF118116">
    <property type="entry name" value="DNA mismatch repair protein MutL"/>
    <property type="match status" value="1"/>
</dbReference>
<dbReference type="SUPFAM" id="SSF54211">
    <property type="entry name" value="Ribosomal protein S5 domain 2-like"/>
    <property type="match status" value="1"/>
</dbReference>
<dbReference type="PROSITE" id="PS00058">
    <property type="entry name" value="DNA_MISMATCH_REPAIR_1"/>
    <property type="match status" value="1"/>
</dbReference>
<accession>B0U5C6</accession>
<protein>
    <recommendedName>
        <fullName evidence="1">DNA mismatch repair protein MutL</fullName>
    </recommendedName>
</protein>
<proteinExistence type="inferred from homology"/>
<gene>
    <name evidence="1" type="primary">mutL</name>
    <name type="ordered locus">Xfasm12_2081</name>
</gene>
<reference key="1">
    <citation type="journal article" date="2010" name="J. Bacteriol.">
        <title>Whole genome sequences of two Xylella fastidiosa strains (M12 and M23) causing almond leaf scorch disease in California.</title>
        <authorList>
            <person name="Chen J."/>
            <person name="Xie G."/>
            <person name="Han S."/>
            <person name="Chertkov O."/>
            <person name="Sims D."/>
            <person name="Civerolo E.L."/>
        </authorList>
    </citation>
    <scope>NUCLEOTIDE SEQUENCE [LARGE SCALE GENOMIC DNA]</scope>
    <source>
        <strain>M12</strain>
    </source>
</reference>
<evidence type="ECO:0000255" key="1">
    <source>
        <dbReference type="HAMAP-Rule" id="MF_00149"/>
    </source>
</evidence>
<sequence>MPIRQLPEILINQIAAGEVVERPASVVKELVENAIDAGATRVDIELEAAGVRLIRIRDNGHGMAAQELPLAVLRHATSKIASLDDLEAVATLGFRGEALPSIASVSRFTLMSRRATDEHGAVLQIEGGTLGEVIPHAHAPGTTVEVRELFYNVPARRKFLRAERTELGHIEEWARSLALAHPDLELRLSHNGKLSRRYKPGDWYSDARLIEILGEDFAHQALRVDHSGAGLRLHGCIVQPHYSRLNADQQYLYVNGRPVRDRSVAHAVKQAYSDVLYQGRHPAYVLFLELDPARVDVNVHPAKHEVRFRDARLIHDFVYRTVQGTLAQTRAGTPPLAVGVGDVEGEGEGARPPGRHAVSFSGRRGGASHVLGSYSTSTAPLMQGVPSVSVADAPAAYAALYAAPPTQVMDAVPQMQTGLPLAAGAGDVPPLGYAIAQLHGIYILAECADGLIVVDMHAAHERIGYERLKRAHDGIGLRTQPLLVPMTLMVAEREADVAECEAETLASLGFEVTRSGPGSLQVRSIPALLSQAEPEMLLRDVLSDLSEHGHTRRVAEARDTLLATMACHGAVRAHRRLSISEMNALLRDMEATERSGQCNHGRPTWARFSLAEIDRWFLRGR</sequence>